<keyword id="KW-0131">Cell cycle</keyword>
<keyword id="KW-0132">Cell division</keyword>
<keyword id="KW-0143">Chaperone</keyword>
<keyword id="KW-0963">Cytoplasm</keyword>
<keyword id="KW-0413">Isomerase</keyword>
<keyword id="KW-1185">Reference proteome</keyword>
<keyword id="KW-0697">Rotamase</keyword>
<name>TIG_SYNWW</name>
<accession>Q0AWE9</accession>
<gene>
    <name evidence="1" type="primary">tig</name>
    <name type="ordered locus">Swol_1657</name>
</gene>
<sequence>MTAKLEKIENSEAYIEIEVSAEQVEEGLQYAYRKVIKQVAIPGFRKGKAPRELLELQFGKEVLFQDALEYIVPEAYDKALEELNIKPIAQPEFDINDPESGQPFKFNARVPVKPEVKLGEIEGIEVEIPDFQVKEEDVIQKFEDMRQQYAQVVEKIEEPAAMGDKLNIDFEGFIDGEAFAGGKGEDYSLELGSNTFIPGFEEQLVGLKAGESKDVLVTFPESYHAEDLAGKDAVFQVSVKRIETTEARELNDEFAQEVSQFNTIDELRQDIRKNLEEMAESRRKESIKTELMEKALEKCDIPVPDAVINMQVERMLQDFEQRMAYQGLTLEQYFQFTNSNREDFSQKIWPEAEKSVKGDFMLEKLAEEKGMEVSEEELNEHIMKLANNFGMEVDKIKEELGDAIENIRTGLKIDKAIDFLIDKAVVKEVAEITAAAAE</sequence>
<feature type="chain" id="PRO_1000022776" description="Trigger factor">
    <location>
        <begin position="1"/>
        <end position="438"/>
    </location>
</feature>
<feature type="domain" description="PPIase FKBP-type" evidence="1">
    <location>
        <begin position="163"/>
        <end position="248"/>
    </location>
</feature>
<proteinExistence type="inferred from homology"/>
<evidence type="ECO:0000255" key="1">
    <source>
        <dbReference type="HAMAP-Rule" id="MF_00303"/>
    </source>
</evidence>
<organism>
    <name type="scientific">Syntrophomonas wolfei subsp. wolfei (strain DSM 2245B / Goettingen)</name>
    <dbReference type="NCBI Taxonomy" id="335541"/>
    <lineage>
        <taxon>Bacteria</taxon>
        <taxon>Bacillati</taxon>
        <taxon>Bacillota</taxon>
        <taxon>Clostridia</taxon>
        <taxon>Eubacteriales</taxon>
        <taxon>Syntrophomonadaceae</taxon>
        <taxon>Syntrophomonas</taxon>
    </lineage>
</organism>
<reference key="1">
    <citation type="journal article" date="2010" name="Environ. Microbiol.">
        <title>The genome of Syntrophomonas wolfei: new insights into syntrophic metabolism and biohydrogen production.</title>
        <authorList>
            <person name="Sieber J.R."/>
            <person name="Sims D.R."/>
            <person name="Han C."/>
            <person name="Kim E."/>
            <person name="Lykidis A."/>
            <person name="Lapidus A.L."/>
            <person name="McDonnald E."/>
            <person name="Rohlin L."/>
            <person name="Culley D.E."/>
            <person name="Gunsalus R."/>
            <person name="McInerney M.J."/>
        </authorList>
    </citation>
    <scope>NUCLEOTIDE SEQUENCE [LARGE SCALE GENOMIC DNA]</scope>
    <source>
        <strain>DSM 2245B / Goettingen</strain>
    </source>
</reference>
<comment type="function">
    <text evidence="1">Involved in protein export. Acts as a chaperone by maintaining the newly synthesized protein in an open conformation. Functions as a peptidyl-prolyl cis-trans isomerase.</text>
</comment>
<comment type="catalytic activity">
    <reaction evidence="1">
        <text>[protein]-peptidylproline (omega=180) = [protein]-peptidylproline (omega=0)</text>
        <dbReference type="Rhea" id="RHEA:16237"/>
        <dbReference type="Rhea" id="RHEA-COMP:10747"/>
        <dbReference type="Rhea" id="RHEA-COMP:10748"/>
        <dbReference type="ChEBI" id="CHEBI:83833"/>
        <dbReference type="ChEBI" id="CHEBI:83834"/>
        <dbReference type="EC" id="5.2.1.8"/>
    </reaction>
</comment>
<comment type="subcellular location">
    <subcellularLocation>
        <location>Cytoplasm</location>
    </subcellularLocation>
    <text evidence="1">About half TF is bound to the ribosome near the polypeptide exit tunnel while the other half is free in the cytoplasm.</text>
</comment>
<comment type="domain">
    <text evidence="1">Consists of 3 domains; the N-terminus binds the ribosome, the middle domain has PPIase activity, while the C-terminus has intrinsic chaperone activity on its own.</text>
</comment>
<comment type="similarity">
    <text evidence="1">Belongs to the FKBP-type PPIase family. Tig subfamily.</text>
</comment>
<dbReference type="EC" id="5.2.1.8" evidence="1"/>
<dbReference type="EMBL" id="CP000448">
    <property type="protein sequence ID" value="ABI68955.1"/>
    <property type="molecule type" value="Genomic_DNA"/>
</dbReference>
<dbReference type="RefSeq" id="WP_011641053.1">
    <property type="nucleotide sequence ID" value="NC_008346.1"/>
</dbReference>
<dbReference type="SMR" id="Q0AWE9"/>
<dbReference type="STRING" id="335541.Swol_1657"/>
<dbReference type="KEGG" id="swo:Swol_1657"/>
<dbReference type="eggNOG" id="COG0544">
    <property type="taxonomic scope" value="Bacteria"/>
</dbReference>
<dbReference type="HOGENOM" id="CLU_033058_3_2_9"/>
<dbReference type="OrthoDB" id="9767721at2"/>
<dbReference type="Proteomes" id="UP000001968">
    <property type="component" value="Chromosome"/>
</dbReference>
<dbReference type="GO" id="GO:0005737">
    <property type="term" value="C:cytoplasm"/>
    <property type="evidence" value="ECO:0007669"/>
    <property type="project" value="UniProtKB-SubCell"/>
</dbReference>
<dbReference type="GO" id="GO:0003755">
    <property type="term" value="F:peptidyl-prolyl cis-trans isomerase activity"/>
    <property type="evidence" value="ECO:0007669"/>
    <property type="project" value="UniProtKB-UniRule"/>
</dbReference>
<dbReference type="GO" id="GO:0044183">
    <property type="term" value="F:protein folding chaperone"/>
    <property type="evidence" value="ECO:0007669"/>
    <property type="project" value="TreeGrafter"/>
</dbReference>
<dbReference type="GO" id="GO:0043022">
    <property type="term" value="F:ribosome binding"/>
    <property type="evidence" value="ECO:0007669"/>
    <property type="project" value="TreeGrafter"/>
</dbReference>
<dbReference type="GO" id="GO:0051083">
    <property type="term" value="P:'de novo' cotranslational protein folding"/>
    <property type="evidence" value="ECO:0007669"/>
    <property type="project" value="TreeGrafter"/>
</dbReference>
<dbReference type="GO" id="GO:0051301">
    <property type="term" value="P:cell division"/>
    <property type="evidence" value="ECO:0007669"/>
    <property type="project" value="UniProtKB-KW"/>
</dbReference>
<dbReference type="GO" id="GO:0061077">
    <property type="term" value="P:chaperone-mediated protein folding"/>
    <property type="evidence" value="ECO:0007669"/>
    <property type="project" value="TreeGrafter"/>
</dbReference>
<dbReference type="GO" id="GO:0015031">
    <property type="term" value="P:protein transport"/>
    <property type="evidence" value="ECO:0007669"/>
    <property type="project" value="UniProtKB-UniRule"/>
</dbReference>
<dbReference type="GO" id="GO:0043335">
    <property type="term" value="P:protein unfolding"/>
    <property type="evidence" value="ECO:0007669"/>
    <property type="project" value="TreeGrafter"/>
</dbReference>
<dbReference type="FunFam" id="3.10.50.40:FF:000001">
    <property type="entry name" value="Trigger factor"/>
    <property type="match status" value="1"/>
</dbReference>
<dbReference type="Gene3D" id="3.10.50.40">
    <property type="match status" value="1"/>
</dbReference>
<dbReference type="Gene3D" id="3.30.70.1050">
    <property type="entry name" value="Trigger factor ribosome-binding domain"/>
    <property type="match status" value="1"/>
</dbReference>
<dbReference type="Gene3D" id="1.10.3120.10">
    <property type="entry name" value="Trigger factor, C-terminal domain"/>
    <property type="match status" value="1"/>
</dbReference>
<dbReference type="HAMAP" id="MF_00303">
    <property type="entry name" value="Trigger_factor_Tig"/>
    <property type="match status" value="1"/>
</dbReference>
<dbReference type="InterPro" id="IPR046357">
    <property type="entry name" value="PPIase_dom_sf"/>
</dbReference>
<dbReference type="InterPro" id="IPR001179">
    <property type="entry name" value="PPIase_FKBP_dom"/>
</dbReference>
<dbReference type="InterPro" id="IPR005215">
    <property type="entry name" value="Trig_fac"/>
</dbReference>
<dbReference type="InterPro" id="IPR008880">
    <property type="entry name" value="Trigger_fac_C"/>
</dbReference>
<dbReference type="InterPro" id="IPR037041">
    <property type="entry name" value="Trigger_fac_C_sf"/>
</dbReference>
<dbReference type="InterPro" id="IPR008881">
    <property type="entry name" value="Trigger_fac_ribosome-bd_bac"/>
</dbReference>
<dbReference type="InterPro" id="IPR036611">
    <property type="entry name" value="Trigger_fac_ribosome-bd_sf"/>
</dbReference>
<dbReference type="InterPro" id="IPR027304">
    <property type="entry name" value="Trigger_fact/SurA_dom_sf"/>
</dbReference>
<dbReference type="NCBIfam" id="TIGR00115">
    <property type="entry name" value="tig"/>
    <property type="match status" value="1"/>
</dbReference>
<dbReference type="PANTHER" id="PTHR30560">
    <property type="entry name" value="TRIGGER FACTOR CHAPERONE AND PEPTIDYL-PROLYL CIS/TRANS ISOMERASE"/>
    <property type="match status" value="1"/>
</dbReference>
<dbReference type="PANTHER" id="PTHR30560:SF3">
    <property type="entry name" value="TRIGGER FACTOR-LIKE PROTEIN TIG, CHLOROPLASTIC"/>
    <property type="match status" value="1"/>
</dbReference>
<dbReference type="Pfam" id="PF00254">
    <property type="entry name" value="FKBP_C"/>
    <property type="match status" value="1"/>
</dbReference>
<dbReference type="Pfam" id="PF05698">
    <property type="entry name" value="Trigger_C"/>
    <property type="match status" value="1"/>
</dbReference>
<dbReference type="Pfam" id="PF05697">
    <property type="entry name" value="Trigger_N"/>
    <property type="match status" value="1"/>
</dbReference>
<dbReference type="PIRSF" id="PIRSF003095">
    <property type="entry name" value="Trigger_factor"/>
    <property type="match status" value="1"/>
</dbReference>
<dbReference type="SUPFAM" id="SSF54534">
    <property type="entry name" value="FKBP-like"/>
    <property type="match status" value="1"/>
</dbReference>
<dbReference type="SUPFAM" id="SSF109998">
    <property type="entry name" value="Triger factor/SurA peptide-binding domain-like"/>
    <property type="match status" value="1"/>
</dbReference>
<dbReference type="SUPFAM" id="SSF102735">
    <property type="entry name" value="Trigger factor ribosome-binding domain"/>
    <property type="match status" value="1"/>
</dbReference>
<dbReference type="PROSITE" id="PS50059">
    <property type="entry name" value="FKBP_PPIASE"/>
    <property type="match status" value="1"/>
</dbReference>
<protein>
    <recommendedName>
        <fullName evidence="1">Trigger factor</fullName>
        <shortName evidence="1">TF</shortName>
        <ecNumber evidence="1">5.2.1.8</ecNumber>
    </recommendedName>
    <alternativeName>
        <fullName evidence="1">PPIase</fullName>
    </alternativeName>
</protein>